<comment type="function">
    <text evidence="4">May function as a negative regulator of endoplasmic reticulum-stress induced autophagy.</text>
</comment>
<comment type="interaction">
    <interactant intactId="EBI-12876824">
        <id>Q9BTX3</id>
    </interactant>
    <interactant intactId="EBI-13381098">
        <id>Q8IYJ2-2</id>
        <label>C10orf67</label>
    </interactant>
    <organismsDiffer>false</organismsDiffer>
    <experiments>3</experiments>
</comment>
<comment type="interaction">
    <interactant intactId="EBI-12876824">
        <id>Q9BTX3</id>
    </interactant>
    <interactant intactId="EBI-6942903">
        <id>Q96BA8</id>
        <label>CREB3L1</label>
    </interactant>
    <organismsDiffer>false</organismsDiffer>
    <experiments>3</experiments>
</comment>
<comment type="interaction">
    <interactant intactId="EBI-12876824">
        <id>Q9BTX3</id>
    </interactant>
    <interactant intactId="EBI-3915253">
        <id>Q15125</id>
        <label>EBP</label>
    </interactant>
    <organismsDiffer>false</organismsDiffer>
    <experiments>3</experiments>
</comment>
<comment type="interaction">
    <interactant intactId="EBI-12876824">
        <id>Q9BTX3</id>
    </interactant>
    <interactant intactId="EBI-18304435">
        <id>Q5JX71</id>
        <label>FAM209A</label>
    </interactant>
    <organismsDiffer>false</organismsDiffer>
    <experiments>3</experiments>
</comment>
<comment type="interaction">
    <interactant intactId="EBI-12876824">
        <id>Q9BTX3</id>
    </interactant>
    <interactant intactId="EBI-13345167">
        <id>Q8TDT2</id>
        <label>GPR152</label>
    </interactant>
    <organismsDiffer>false</organismsDiffer>
    <experiments>3</experiments>
</comment>
<comment type="interaction">
    <interactant intactId="EBI-12876824">
        <id>Q9BTX3</id>
    </interactant>
    <interactant intactId="EBI-13067820">
        <id>Q9NZD1</id>
        <label>GPRC5D</label>
    </interactant>
    <organismsDiffer>false</organismsDiffer>
    <experiments>3</experiments>
</comment>
<comment type="interaction">
    <interactant intactId="EBI-12876824">
        <id>Q9BTX3</id>
    </interactant>
    <interactant intactId="EBI-12017638">
        <id>P48051</id>
        <label>KCNJ6</label>
    </interactant>
    <organismsDiffer>false</organismsDiffer>
    <experiments>3</experiments>
</comment>
<comment type="interaction">
    <interactant intactId="EBI-12876824">
        <id>Q9BTX3</id>
    </interactant>
    <interactant intactId="EBI-373355">
        <id>Q5SR56</id>
        <label>MFSD14B</label>
    </interactant>
    <organismsDiffer>false</organismsDiffer>
    <experiments>3</experiments>
</comment>
<comment type="interaction">
    <interactant intactId="EBI-12876824">
        <id>Q9BTX3</id>
    </interactant>
    <interactant intactId="EBI-11978907">
        <id>Q9ULP0-2</id>
        <label>NDRG4</label>
    </interactant>
    <organismsDiffer>false</organismsDiffer>
    <experiments>3</experiments>
</comment>
<comment type="interaction">
    <interactant intactId="EBI-12876824">
        <id>Q9BTX3</id>
    </interactant>
    <interactant intactId="EBI-1050125">
        <id>O15173</id>
        <label>PGRMC2</label>
    </interactant>
    <organismsDiffer>false</organismsDiffer>
    <experiments>3</experiments>
</comment>
<comment type="interaction">
    <interactant intactId="EBI-12876824">
        <id>Q9BTX3</id>
    </interactant>
    <interactant intactId="EBI-11337973">
        <id>Q9BRK0</id>
        <label>REEP2</label>
    </interactant>
    <organismsDiffer>false</organismsDiffer>
    <experiments>3</experiments>
</comment>
<comment type="interaction">
    <interactant intactId="EBI-12876824">
        <id>Q9BTX3</id>
    </interactant>
    <interactant intactId="EBI-7545592">
        <id>Q9H6H4</id>
        <label>REEP4</label>
    </interactant>
    <organismsDiffer>false</organismsDiffer>
    <experiments>3</experiments>
</comment>
<comment type="interaction">
    <interactant intactId="EBI-12876824">
        <id>Q9BTX3</id>
    </interactant>
    <interactant intactId="EBI-2466594">
        <id>Q6ZMZ0</id>
        <label>RNF19B</label>
    </interactant>
    <organismsDiffer>false</organismsDiffer>
    <experiments>3</experiments>
</comment>
<comment type="interaction">
    <interactant intactId="EBI-12876824">
        <id>Q9BTX3</id>
    </interactant>
    <interactant intactId="EBI-12823227">
        <id>Q6ZMJ2-2</id>
        <label>SCARA5</label>
    </interactant>
    <organismsDiffer>false</organismsDiffer>
    <experiments>3</experiments>
</comment>
<comment type="interaction">
    <interactant intactId="EBI-12876824">
        <id>Q9BTX3</id>
    </interactant>
    <interactant intactId="EBI-17247926">
        <id>Q9NY72</id>
        <label>SCN3B</label>
    </interactant>
    <organismsDiffer>false</organismsDiffer>
    <experiments>3</experiments>
</comment>
<comment type="interaction">
    <interactant intactId="EBI-12876824">
        <id>Q9BTX3</id>
    </interactant>
    <interactant intactId="EBI-18159983">
        <id>Q3KNW5</id>
        <label>SLC10A6</label>
    </interactant>
    <organismsDiffer>false</organismsDiffer>
    <experiments>3</experiments>
</comment>
<comment type="interaction">
    <interactant intactId="EBI-12876824">
        <id>Q9BTX3</id>
    </interactant>
    <interactant intactId="EBI-10262251">
        <id>Q8IWU4</id>
        <label>SLC30A8</label>
    </interactant>
    <organismsDiffer>false</organismsDiffer>
    <experiments>3</experiments>
</comment>
<comment type="interaction">
    <interactant intactId="EBI-12876824">
        <id>Q9BTX3</id>
    </interactant>
    <interactant intactId="EBI-13292283">
        <id>Q9UHI5</id>
        <label>SLC7A8</label>
    </interactant>
    <organismsDiffer>false</organismsDiffer>
    <experiments>3</experiments>
</comment>
<comment type="interaction">
    <interactant intactId="EBI-12876824">
        <id>Q9BTX3</id>
    </interactant>
    <interactant intactId="EBI-742688">
        <id>Q9NZD8</id>
        <label>SPG21</label>
    </interactant>
    <organismsDiffer>false</organismsDiffer>
    <experiments>3</experiments>
</comment>
<comment type="interaction">
    <interactant intactId="EBI-12876824">
        <id>Q9BTX3</id>
    </interactant>
    <interactant intactId="EBI-1211440">
        <id>P27105</id>
        <label>STOM</label>
    </interactant>
    <organismsDiffer>false</organismsDiffer>
    <experiments>3</experiments>
</comment>
<comment type="interaction">
    <interactant intactId="EBI-12876824">
        <id>Q9BTX3</id>
    </interactant>
    <interactant intactId="EBI-6447886">
        <id>Q9Y320</id>
        <label>TMX2</label>
    </interactant>
    <organismsDiffer>false</organismsDiffer>
    <experiments>3</experiments>
</comment>
<comment type="subcellular location">
    <subcellularLocation>
        <location evidence="4 6">Endoplasmic reticulum membrane</location>
        <topology evidence="1">Multi-pass membrane protein</topology>
    </subcellularLocation>
</comment>
<comment type="alternative products">
    <event type="alternative splicing"/>
    <isoform>
        <id>Q9BTX3-1</id>
        <name>1</name>
        <sequence type="displayed"/>
    </isoform>
    <isoform>
        <id>Q9BTX3-2</id>
        <name>2</name>
        <sequence type="described" ref="VSP_032505"/>
    </isoform>
</comment>
<comment type="similarity">
    <text evidence="9">Belongs to the TMEM208 family.</text>
</comment>
<comment type="sequence caution" evidence="9">
    <conflict type="frameshift">
        <sequence resource="EMBL-CDS" id="AAF29134"/>
    </conflict>
</comment>
<proteinExistence type="evidence at protein level"/>
<keyword id="KW-0007">Acetylation</keyword>
<keyword id="KW-0025">Alternative splicing</keyword>
<keyword id="KW-0072">Autophagy</keyword>
<keyword id="KW-0256">Endoplasmic reticulum</keyword>
<keyword id="KW-0472">Membrane</keyword>
<keyword id="KW-1267">Proteomics identification</keyword>
<keyword id="KW-1185">Reference proteome</keyword>
<keyword id="KW-0812">Transmembrane</keyword>
<keyword id="KW-1133">Transmembrane helix</keyword>
<dbReference type="EMBL" id="AF161519">
    <property type="protein sequence ID" value="AAF29134.1"/>
    <property type="status" value="ALT_FRAME"/>
    <property type="molecule type" value="mRNA"/>
</dbReference>
<dbReference type="EMBL" id="CH471092">
    <property type="protein sequence ID" value="EAW83106.1"/>
    <property type="molecule type" value="Genomic_DNA"/>
</dbReference>
<dbReference type="EMBL" id="CH471092">
    <property type="protein sequence ID" value="EAW83107.1"/>
    <property type="molecule type" value="Genomic_DNA"/>
</dbReference>
<dbReference type="EMBL" id="BC003080">
    <property type="protein sequence ID" value="AAH03080.1"/>
    <property type="molecule type" value="mRNA"/>
</dbReference>
<dbReference type="EMBL" id="BC021109">
    <property type="protein sequence ID" value="AAH21109.1"/>
    <property type="molecule type" value="mRNA"/>
</dbReference>
<dbReference type="EMBL" id="BC013412">
    <property type="protein sequence ID" value="AAH13412.1"/>
    <property type="molecule type" value="mRNA"/>
</dbReference>
<dbReference type="CCDS" id="CCDS45511.1">
    <molecule id="Q9BTX3-1"/>
</dbReference>
<dbReference type="RefSeq" id="NP_001305146.1">
    <property type="nucleotide sequence ID" value="NM_001318217.1"/>
</dbReference>
<dbReference type="RefSeq" id="NP_054906.2">
    <molecule id="Q9BTX3-1"/>
    <property type="nucleotide sequence ID" value="NM_014187.4"/>
</dbReference>
<dbReference type="BioGRID" id="118868">
    <property type="interactions" value="53"/>
</dbReference>
<dbReference type="FunCoup" id="Q9BTX3">
    <property type="interactions" value="339"/>
</dbReference>
<dbReference type="IntAct" id="Q9BTX3">
    <property type="interactions" value="43"/>
</dbReference>
<dbReference type="STRING" id="9606.ENSP00000305892"/>
<dbReference type="TCDB" id="9.B.26.1.1">
    <property type="family name" value="the regulator of er stress and autophagy tmem208 (tmem208) family"/>
</dbReference>
<dbReference type="GlyGen" id="Q9BTX3">
    <property type="glycosylation" value="1 site"/>
</dbReference>
<dbReference type="iPTMnet" id="Q9BTX3"/>
<dbReference type="BioMuta" id="TMEM208"/>
<dbReference type="DMDM" id="74733157"/>
<dbReference type="jPOST" id="Q9BTX3"/>
<dbReference type="MassIVE" id="Q9BTX3"/>
<dbReference type="PaxDb" id="9606-ENSP00000305892"/>
<dbReference type="PeptideAtlas" id="Q9BTX3"/>
<dbReference type="ProteomicsDB" id="79025">
    <molecule id="Q9BTX3-1"/>
</dbReference>
<dbReference type="ProteomicsDB" id="79026">
    <molecule id="Q9BTX3-2"/>
</dbReference>
<dbReference type="Pumba" id="Q9BTX3"/>
<dbReference type="TopDownProteomics" id="Q9BTX3-1">
    <molecule id="Q9BTX3-1"/>
</dbReference>
<dbReference type="Antibodypedia" id="48545">
    <property type="antibodies" value="24 antibodies from 10 providers"/>
</dbReference>
<dbReference type="DNASU" id="29100"/>
<dbReference type="Ensembl" id="ENST00000304800.14">
    <molecule id="Q9BTX3-1"/>
    <property type="protein sequence ID" value="ENSP00000305892.9"/>
    <property type="gene ID" value="ENSG00000168701.19"/>
</dbReference>
<dbReference type="Ensembl" id="ENST00000562235.5">
    <molecule id="Q9BTX3-2"/>
    <property type="protein sequence ID" value="ENSP00000457502.1"/>
    <property type="gene ID" value="ENSG00000168701.19"/>
</dbReference>
<dbReference type="GeneID" id="29100"/>
<dbReference type="KEGG" id="hsa:29100"/>
<dbReference type="MANE-Select" id="ENST00000304800.14">
    <property type="protein sequence ID" value="ENSP00000305892.9"/>
    <property type="RefSeq nucleotide sequence ID" value="NM_014187.4"/>
    <property type="RefSeq protein sequence ID" value="NP_054906.2"/>
</dbReference>
<dbReference type="UCSC" id="uc002esi.3">
    <molecule id="Q9BTX3-1"/>
    <property type="organism name" value="human"/>
</dbReference>
<dbReference type="AGR" id="HGNC:25015"/>
<dbReference type="CTD" id="29100"/>
<dbReference type="DisGeNET" id="29100"/>
<dbReference type="GeneCards" id="TMEM208"/>
<dbReference type="HGNC" id="HGNC:25015">
    <property type="gene designation" value="TMEM208"/>
</dbReference>
<dbReference type="HPA" id="ENSG00000168701">
    <property type="expression patterns" value="Low tissue specificity"/>
</dbReference>
<dbReference type="MIM" id="620781">
    <property type="type" value="gene"/>
</dbReference>
<dbReference type="neXtProt" id="NX_Q9BTX3"/>
<dbReference type="OpenTargets" id="ENSG00000168701"/>
<dbReference type="PharmGKB" id="PA162406408"/>
<dbReference type="VEuPathDB" id="HostDB:ENSG00000168701"/>
<dbReference type="eggNOG" id="KOG3269">
    <property type="taxonomic scope" value="Eukaryota"/>
</dbReference>
<dbReference type="GeneTree" id="ENSGT00390000008139"/>
<dbReference type="HOGENOM" id="CLU_094308_3_0_1"/>
<dbReference type="InParanoid" id="Q9BTX3"/>
<dbReference type="OMA" id="PIRAGWM"/>
<dbReference type="OrthoDB" id="10012212at2759"/>
<dbReference type="PAN-GO" id="Q9BTX3">
    <property type="GO annotations" value="1 GO annotation based on evolutionary models"/>
</dbReference>
<dbReference type="PhylomeDB" id="Q9BTX3"/>
<dbReference type="TreeFam" id="TF318118"/>
<dbReference type="PathwayCommons" id="Q9BTX3"/>
<dbReference type="SignaLink" id="Q9BTX3"/>
<dbReference type="BioGRID-ORCS" id="29100">
    <property type="hits" value="56 hits in 1158 CRISPR screens"/>
</dbReference>
<dbReference type="ChiTaRS" id="TMEM208">
    <property type="organism name" value="human"/>
</dbReference>
<dbReference type="GenomeRNAi" id="29100"/>
<dbReference type="Pharos" id="Q9BTX3">
    <property type="development level" value="Tdark"/>
</dbReference>
<dbReference type="PRO" id="PR:Q9BTX3"/>
<dbReference type="Proteomes" id="UP000005640">
    <property type="component" value="Chromosome 16"/>
</dbReference>
<dbReference type="RNAct" id="Q9BTX3">
    <property type="molecule type" value="protein"/>
</dbReference>
<dbReference type="Bgee" id="ENSG00000168701">
    <property type="expression patterns" value="Expressed in islet of Langerhans and 191 other cell types or tissues"/>
</dbReference>
<dbReference type="ExpressionAtlas" id="Q9BTX3">
    <property type="expression patterns" value="baseline and differential"/>
</dbReference>
<dbReference type="GO" id="GO:0005789">
    <property type="term" value="C:endoplasmic reticulum membrane"/>
    <property type="evidence" value="ECO:0000314"/>
    <property type="project" value="UniProtKB"/>
</dbReference>
<dbReference type="GO" id="GO:0043231">
    <property type="term" value="C:intracellular membrane-bounded organelle"/>
    <property type="evidence" value="ECO:0000318"/>
    <property type="project" value="GO_Central"/>
</dbReference>
<dbReference type="GO" id="GO:0005773">
    <property type="term" value="C:vacuole"/>
    <property type="evidence" value="ECO:0007669"/>
    <property type="project" value="GOC"/>
</dbReference>
<dbReference type="GO" id="GO:0006914">
    <property type="term" value="P:autophagy"/>
    <property type="evidence" value="ECO:0007669"/>
    <property type="project" value="UniProtKB-KW"/>
</dbReference>
<dbReference type="GO" id="GO:0006624">
    <property type="term" value="P:vacuolar protein processing"/>
    <property type="evidence" value="ECO:0000318"/>
    <property type="project" value="GO_Central"/>
</dbReference>
<dbReference type="InterPro" id="IPR008506">
    <property type="entry name" value="SND2/TMEM208"/>
</dbReference>
<dbReference type="PANTHER" id="PTHR13505">
    <property type="entry name" value="TRANSMEMBRANE PROTEIN 208"/>
    <property type="match status" value="1"/>
</dbReference>
<dbReference type="PANTHER" id="PTHR13505:SF7">
    <property type="entry name" value="TRANSMEMBRANE PROTEIN 208"/>
    <property type="match status" value="1"/>
</dbReference>
<dbReference type="Pfam" id="PF05620">
    <property type="entry name" value="TMEM208_SND2"/>
    <property type="match status" value="1"/>
</dbReference>
<accession>Q9BTX3</accession>
<accession>Q05CT0</accession>
<accession>Q96D25</accession>
<accession>Q9NZZ7</accession>
<feature type="chain" id="PRO_0000325967" description="Transmembrane protein 208">
    <location>
        <begin position="1"/>
        <end position="173"/>
    </location>
</feature>
<feature type="transmembrane region" description="Helical" evidence="1">
    <location>
        <begin position="25"/>
        <end position="45"/>
    </location>
</feature>
<feature type="transmembrane region" description="Helical" evidence="1">
    <location>
        <begin position="51"/>
        <end position="68"/>
    </location>
</feature>
<feature type="transmembrane region" description="Helical" evidence="1">
    <location>
        <begin position="105"/>
        <end position="129"/>
    </location>
</feature>
<feature type="region of interest" description="Disordered" evidence="2">
    <location>
        <begin position="152"/>
        <end position="173"/>
    </location>
</feature>
<feature type="compositionally biased region" description="Basic residues" evidence="2">
    <location>
        <begin position="160"/>
        <end position="173"/>
    </location>
</feature>
<feature type="modified residue" description="N-acetylmethionine" evidence="5 10">
    <location>
        <position position="1"/>
    </location>
</feature>
<feature type="splice variant" id="VSP_032505" description="In isoform 2." evidence="7 8">
    <location>
        <begin position="101"/>
        <end position="173"/>
    </location>
</feature>
<feature type="sequence variant" id="VAR_089709" description="Found in a child with developmental delay, skeletal abnormalities, multiple hair whorls, cardiac and neurological issues; uncertain significance; partially rescues the lethality in the fruit fly model; no effect on localization to the endoplasmic reticulum membrane; dbSNP:rs905460688." evidence="6">
    <original>L</original>
    <variation>P</variation>
    <location>
        <position position="27"/>
    </location>
</feature>
<feature type="sequence variant" id="VAR_039958" description="In dbSNP:rs17851038." evidence="3">
    <original>D</original>
    <variation>Y</variation>
    <location>
        <position position="82"/>
    </location>
</feature>
<feature type="sequence variant" id="VAR_053933" description="In dbSNP:rs11553801.">
    <original>L</original>
    <variation>P</variation>
    <location>
        <position position="102"/>
    </location>
</feature>
<feature type="sequence conflict" description="In Ref. 1; AAF29134." evidence="9" ref="1">
    <original>M</original>
    <variation>T</variation>
    <location>
        <position position="90"/>
    </location>
</feature>
<reference key="1">
    <citation type="journal article" date="2000" name="Genome Res.">
        <title>Cloning and functional analysis of cDNAs with open reading frames for 300 previously undefined genes expressed in CD34+ hematopoietic stem/progenitor cells.</title>
        <authorList>
            <person name="Zhang Q.-H."/>
            <person name="Ye M."/>
            <person name="Wu X.-Y."/>
            <person name="Ren S.-X."/>
            <person name="Zhao M."/>
            <person name="Zhao C.-J."/>
            <person name="Fu G."/>
            <person name="Shen Y."/>
            <person name="Fan H.-Y."/>
            <person name="Lu G."/>
            <person name="Zhong M."/>
            <person name="Xu X.-R."/>
            <person name="Han Z.-G."/>
            <person name="Zhang J.-W."/>
            <person name="Tao J."/>
            <person name="Huang Q.-H."/>
            <person name="Zhou J."/>
            <person name="Hu G.-X."/>
            <person name="Gu J."/>
            <person name="Chen S.-J."/>
            <person name="Chen Z."/>
        </authorList>
    </citation>
    <scope>NUCLEOTIDE SEQUENCE [LARGE SCALE MRNA] (ISOFORM 2)</scope>
    <source>
        <tissue>Blood</tissue>
    </source>
</reference>
<reference key="2">
    <citation type="submission" date="2005-07" db="EMBL/GenBank/DDBJ databases">
        <authorList>
            <person name="Mural R.J."/>
            <person name="Istrail S."/>
            <person name="Sutton G.G."/>
            <person name="Florea L."/>
            <person name="Halpern A.L."/>
            <person name="Mobarry C.M."/>
            <person name="Lippert R."/>
            <person name="Walenz B."/>
            <person name="Shatkay H."/>
            <person name="Dew I."/>
            <person name="Miller J.R."/>
            <person name="Flanigan M.J."/>
            <person name="Edwards N.J."/>
            <person name="Bolanos R."/>
            <person name="Fasulo D."/>
            <person name="Halldorsson B.V."/>
            <person name="Hannenhalli S."/>
            <person name="Turner R."/>
            <person name="Yooseph S."/>
            <person name="Lu F."/>
            <person name="Nusskern D.R."/>
            <person name="Shue B.C."/>
            <person name="Zheng X.H."/>
            <person name="Zhong F."/>
            <person name="Delcher A.L."/>
            <person name="Huson D.H."/>
            <person name="Kravitz S.A."/>
            <person name="Mouchard L."/>
            <person name="Reinert K."/>
            <person name="Remington K.A."/>
            <person name="Clark A.G."/>
            <person name="Waterman M.S."/>
            <person name="Eichler E.E."/>
            <person name="Adams M.D."/>
            <person name="Hunkapiller M.W."/>
            <person name="Myers E.W."/>
            <person name="Venter J.C."/>
        </authorList>
    </citation>
    <scope>NUCLEOTIDE SEQUENCE [LARGE SCALE GENOMIC DNA]</scope>
</reference>
<reference key="3">
    <citation type="journal article" date="2004" name="Genome Res.">
        <title>The status, quality, and expansion of the NIH full-length cDNA project: the Mammalian Gene Collection (MGC).</title>
        <authorList>
            <consortium name="The MGC Project Team"/>
        </authorList>
    </citation>
    <scope>NUCLEOTIDE SEQUENCE [LARGE SCALE MRNA] (ISOFORMS 1 AND 2)</scope>
    <scope>VARIANT TYR-82</scope>
    <source>
        <tissue>Ovary</tissue>
        <tissue>Skin</tissue>
        <tissue>Uterus</tissue>
    </source>
</reference>
<reference key="4">
    <citation type="journal article" date="2012" name="Proc. Natl. Acad. Sci. U.S.A.">
        <title>N-terminal acetylome analyses and functional insights of the N-terminal acetyltransferase NatB.</title>
        <authorList>
            <person name="Van Damme P."/>
            <person name="Lasa M."/>
            <person name="Polevoda B."/>
            <person name="Gazquez C."/>
            <person name="Elosegui-Artola A."/>
            <person name="Kim D.S."/>
            <person name="De Juan-Pardo E."/>
            <person name="Demeyer K."/>
            <person name="Hole K."/>
            <person name="Larrea E."/>
            <person name="Timmerman E."/>
            <person name="Prieto J."/>
            <person name="Arnesen T."/>
            <person name="Sherman F."/>
            <person name="Gevaert K."/>
            <person name="Aldabe R."/>
        </authorList>
    </citation>
    <scope>ACETYLATION [LARGE SCALE ANALYSIS] AT MET-1</scope>
    <scope>IDENTIFICATION BY MASS SPECTROMETRY [LARGE SCALE ANALYSIS]</scope>
</reference>
<reference key="5">
    <citation type="journal article" date="2013" name="PLoS ONE">
        <title>Transmembrane protein 208: a novel ER-localized protein that regulates autophagy and ER stress.</title>
        <authorList>
            <person name="Zhao Y."/>
            <person name="Hu J."/>
            <person name="Miao G."/>
            <person name="Qu L."/>
            <person name="Wang Z."/>
            <person name="Li G."/>
            <person name="Lv P."/>
            <person name="Ma D."/>
            <person name="Chen Y."/>
        </authorList>
    </citation>
    <scope>FUNCTION</scope>
    <scope>SUBCELLULAR LOCATION</scope>
</reference>
<reference key="6">
    <citation type="journal article" date="2015" name="Cell Rep.">
        <title>An organellar nalpha-acetyltransferase, naa60, acetylates cytosolic N termini of transmembrane proteins and maintains Golgi integrity.</title>
        <authorList>
            <person name="Aksnes H."/>
            <person name="Van Damme P."/>
            <person name="Goris M."/>
            <person name="Starheim K.K."/>
            <person name="Marie M."/>
            <person name="Stoeve S.I."/>
            <person name="Hoel C."/>
            <person name="Kalvik T.V."/>
            <person name="Hole K."/>
            <person name="Glomnes N."/>
            <person name="Furnes C."/>
            <person name="Ljostveit S."/>
            <person name="Ziegler M."/>
            <person name="Niere M."/>
            <person name="Gevaert K."/>
            <person name="Arnesen T."/>
        </authorList>
    </citation>
    <scope>ACETYLATION AT MET-1</scope>
</reference>
<reference key="7">
    <citation type="journal article" date="2024" name="Proc. Natl. Acad. Sci. U.S.A.">
        <title>Loss of the endoplasmic reticulum protein Tmem208 affects cell polarity, development, and viability.</title>
        <authorList>
            <consortium name="Undiagnosed Diseases Network"/>
            <person name="Dutta D."/>
            <person name="Kanca O."/>
            <person name="Shridharan R.V."/>
            <person name="Marcogliese P.C."/>
            <person name="Steger B."/>
            <person name="Morimoto M."/>
            <person name="Frost F.G."/>
            <person name="Macnamara E."/>
            <person name="Wangler M.F."/>
            <person name="Yamamoto S."/>
            <person name="Jenny A."/>
            <person name="Adams D."/>
            <person name="Malicdan M.C."/>
            <person name="Bellen H.J."/>
        </authorList>
    </citation>
    <scope>VARIANT PRO-27</scope>
    <scope>CHARACTERIZATION OF VARIANT PRO-27</scope>
    <scope>SUBCELLULAR LOCATION</scope>
</reference>
<organism>
    <name type="scientific">Homo sapiens</name>
    <name type="common">Human</name>
    <dbReference type="NCBI Taxonomy" id="9606"/>
    <lineage>
        <taxon>Eukaryota</taxon>
        <taxon>Metazoa</taxon>
        <taxon>Chordata</taxon>
        <taxon>Craniata</taxon>
        <taxon>Vertebrata</taxon>
        <taxon>Euteleostomi</taxon>
        <taxon>Mammalia</taxon>
        <taxon>Eutheria</taxon>
        <taxon>Euarchontoglires</taxon>
        <taxon>Primates</taxon>
        <taxon>Haplorrhini</taxon>
        <taxon>Catarrhini</taxon>
        <taxon>Hominidae</taxon>
        <taxon>Homo</taxon>
    </lineage>
</organism>
<protein>
    <recommendedName>
        <fullName>Transmembrane protein 208</fullName>
    </recommendedName>
</protein>
<name>TM208_HUMAN</name>
<evidence type="ECO:0000255" key="1"/>
<evidence type="ECO:0000256" key="2">
    <source>
        <dbReference type="SAM" id="MobiDB-lite"/>
    </source>
</evidence>
<evidence type="ECO:0000269" key="3">
    <source>
    </source>
</evidence>
<evidence type="ECO:0000269" key="4">
    <source>
    </source>
</evidence>
<evidence type="ECO:0000269" key="5">
    <source>
    </source>
</evidence>
<evidence type="ECO:0000269" key="6">
    <source>
    </source>
</evidence>
<evidence type="ECO:0000303" key="7">
    <source>
    </source>
</evidence>
<evidence type="ECO:0000303" key="8">
    <source>
    </source>
</evidence>
<evidence type="ECO:0000305" key="9"/>
<evidence type="ECO:0007744" key="10">
    <source>
    </source>
</evidence>
<sequence length="173" mass="19642">MAPKGKVGTRGKKQIFEENRETLKFYLRIILGANAIYCLVTLVFFYSSASFWAWLALGFSLAVYGASYHSMSSMARAAFSEDGALMDGGMDLNMEQGMAEHLKDVILLTAIVQVLSCFSLYVWSFWLLAPGRALYLLWVNVLGPWFTADSGTPAPEHNEKRQRRQERRQMKRL</sequence>
<gene>
    <name type="primary">TMEM208</name>
    <name type="ORF">HSPC171</name>
</gene>